<accession>Q48CM7</accession>
<protein>
    <recommendedName>
        <fullName evidence="1">Oxygen-dependent choline dehydrogenase</fullName>
        <shortName evidence="1">CDH</shortName>
        <shortName evidence="1">CHD</shortName>
        <ecNumber evidence="1">1.1.99.1</ecNumber>
    </recommendedName>
    <alternativeName>
        <fullName evidence="1">Betaine aldehyde dehydrogenase</fullName>
        <shortName evidence="1">BADH</shortName>
        <ecNumber evidence="1">1.2.1.8</ecNumber>
    </alternativeName>
</protein>
<proteinExistence type="inferred from homology"/>
<comment type="function">
    <text evidence="1">Involved in the biosynthesis of the osmoprotectant glycine betaine. Catalyzes the oxidation of choline to betaine aldehyde and betaine aldehyde to glycine betaine at the same rate.</text>
</comment>
<comment type="catalytic activity">
    <reaction evidence="1">
        <text>choline + A = betaine aldehyde + AH2</text>
        <dbReference type="Rhea" id="RHEA:17433"/>
        <dbReference type="ChEBI" id="CHEBI:13193"/>
        <dbReference type="ChEBI" id="CHEBI:15354"/>
        <dbReference type="ChEBI" id="CHEBI:15710"/>
        <dbReference type="ChEBI" id="CHEBI:17499"/>
        <dbReference type="EC" id="1.1.99.1"/>
    </reaction>
</comment>
<comment type="catalytic activity">
    <reaction evidence="1">
        <text>betaine aldehyde + NAD(+) + H2O = glycine betaine + NADH + 2 H(+)</text>
        <dbReference type="Rhea" id="RHEA:15305"/>
        <dbReference type="ChEBI" id="CHEBI:15377"/>
        <dbReference type="ChEBI" id="CHEBI:15378"/>
        <dbReference type="ChEBI" id="CHEBI:15710"/>
        <dbReference type="ChEBI" id="CHEBI:17750"/>
        <dbReference type="ChEBI" id="CHEBI:57540"/>
        <dbReference type="ChEBI" id="CHEBI:57945"/>
        <dbReference type="EC" id="1.2.1.8"/>
    </reaction>
</comment>
<comment type="cofactor">
    <cofactor evidence="1">
        <name>FAD</name>
        <dbReference type="ChEBI" id="CHEBI:57692"/>
    </cofactor>
</comment>
<comment type="pathway">
    <text evidence="1">Amine and polyamine biosynthesis; betaine biosynthesis via choline pathway; betaine aldehyde from choline (cytochrome c reductase route): step 1/1.</text>
</comment>
<comment type="similarity">
    <text evidence="1">Belongs to the GMC oxidoreductase family.</text>
</comment>
<reference key="1">
    <citation type="journal article" date="2005" name="J. Bacteriol.">
        <title>Whole-genome sequence analysis of Pseudomonas syringae pv. phaseolicola 1448A reveals divergence among pathovars in genes involved in virulence and transposition.</title>
        <authorList>
            <person name="Joardar V."/>
            <person name="Lindeberg M."/>
            <person name="Jackson R.W."/>
            <person name="Selengut J."/>
            <person name="Dodson R."/>
            <person name="Brinkac L.M."/>
            <person name="Daugherty S.C."/>
            <person name="DeBoy R.T."/>
            <person name="Durkin A.S."/>
            <person name="Gwinn Giglio M."/>
            <person name="Madupu R."/>
            <person name="Nelson W.C."/>
            <person name="Rosovitz M.J."/>
            <person name="Sullivan S.A."/>
            <person name="Crabtree J."/>
            <person name="Creasy T."/>
            <person name="Davidsen T.M."/>
            <person name="Haft D.H."/>
            <person name="Zafar N."/>
            <person name="Zhou L."/>
            <person name="Halpin R."/>
            <person name="Holley T."/>
            <person name="Khouri H.M."/>
            <person name="Feldblyum T.V."/>
            <person name="White O."/>
            <person name="Fraser C.M."/>
            <person name="Chatterjee A.K."/>
            <person name="Cartinhour S."/>
            <person name="Schneider D."/>
            <person name="Mansfield J.W."/>
            <person name="Collmer A."/>
            <person name="Buell R."/>
        </authorList>
    </citation>
    <scope>NUCLEOTIDE SEQUENCE [LARGE SCALE GENOMIC DNA]</scope>
    <source>
        <strain>1448A / Race 6</strain>
    </source>
</reference>
<gene>
    <name evidence="1" type="primary">betA</name>
    <name type="ordered locus">PSPPH_4766</name>
</gene>
<keyword id="KW-0274">FAD</keyword>
<keyword id="KW-0285">Flavoprotein</keyword>
<keyword id="KW-0520">NAD</keyword>
<keyword id="KW-0560">Oxidoreductase</keyword>
<dbReference type="EC" id="1.1.99.1" evidence="1"/>
<dbReference type="EC" id="1.2.1.8" evidence="1"/>
<dbReference type="EMBL" id="CP000058">
    <property type="protein sequence ID" value="AAZ35413.1"/>
    <property type="molecule type" value="Genomic_DNA"/>
</dbReference>
<dbReference type="RefSeq" id="WP_011169730.1">
    <property type="nucleotide sequence ID" value="NC_005773.3"/>
</dbReference>
<dbReference type="SMR" id="Q48CM7"/>
<dbReference type="KEGG" id="psp:PSPPH_4766"/>
<dbReference type="eggNOG" id="COG2303">
    <property type="taxonomic scope" value="Bacteria"/>
</dbReference>
<dbReference type="HOGENOM" id="CLU_002865_7_1_6"/>
<dbReference type="UniPathway" id="UPA00529">
    <property type="reaction ID" value="UER00385"/>
</dbReference>
<dbReference type="Proteomes" id="UP000000551">
    <property type="component" value="Chromosome"/>
</dbReference>
<dbReference type="GO" id="GO:0016020">
    <property type="term" value="C:membrane"/>
    <property type="evidence" value="ECO:0007669"/>
    <property type="project" value="TreeGrafter"/>
</dbReference>
<dbReference type="GO" id="GO:0008802">
    <property type="term" value="F:betaine-aldehyde dehydrogenase (NAD+) activity"/>
    <property type="evidence" value="ECO:0007669"/>
    <property type="project" value="UniProtKB-EC"/>
</dbReference>
<dbReference type="GO" id="GO:0008812">
    <property type="term" value="F:choline dehydrogenase activity"/>
    <property type="evidence" value="ECO:0007669"/>
    <property type="project" value="UniProtKB-UniRule"/>
</dbReference>
<dbReference type="GO" id="GO:0050660">
    <property type="term" value="F:flavin adenine dinucleotide binding"/>
    <property type="evidence" value="ECO:0007669"/>
    <property type="project" value="InterPro"/>
</dbReference>
<dbReference type="GO" id="GO:0019285">
    <property type="term" value="P:glycine betaine biosynthetic process from choline"/>
    <property type="evidence" value="ECO:0007669"/>
    <property type="project" value="UniProtKB-UniRule"/>
</dbReference>
<dbReference type="Gene3D" id="3.50.50.60">
    <property type="entry name" value="FAD/NAD(P)-binding domain"/>
    <property type="match status" value="1"/>
</dbReference>
<dbReference type="Gene3D" id="3.30.560.10">
    <property type="entry name" value="Glucose Oxidase, domain 3"/>
    <property type="match status" value="1"/>
</dbReference>
<dbReference type="HAMAP" id="MF_00750">
    <property type="entry name" value="Choline_dehydrogen"/>
    <property type="match status" value="1"/>
</dbReference>
<dbReference type="InterPro" id="IPR011533">
    <property type="entry name" value="BetA"/>
</dbReference>
<dbReference type="InterPro" id="IPR036188">
    <property type="entry name" value="FAD/NAD-bd_sf"/>
</dbReference>
<dbReference type="InterPro" id="IPR012132">
    <property type="entry name" value="GMC_OxRdtase"/>
</dbReference>
<dbReference type="InterPro" id="IPR000172">
    <property type="entry name" value="GMC_OxRdtase_N"/>
</dbReference>
<dbReference type="InterPro" id="IPR007867">
    <property type="entry name" value="GMC_OxRtase_C"/>
</dbReference>
<dbReference type="NCBIfam" id="TIGR01810">
    <property type="entry name" value="betA"/>
    <property type="match status" value="1"/>
</dbReference>
<dbReference type="NCBIfam" id="NF002550">
    <property type="entry name" value="PRK02106.1"/>
    <property type="match status" value="1"/>
</dbReference>
<dbReference type="PANTHER" id="PTHR11552:SF147">
    <property type="entry name" value="CHOLINE DEHYDROGENASE, MITOCHONDRIAL"/>
    <property type="match status" value="1"/>
</dbReference>
<dbReference type="PANTHER" id="PTHR11552">
    <property type="entry name" value="GLUCOSE-METHANOL-CHOLINE GMC OXIDOREDUCTASE"/>
    <property type="match status" value="1"/>
</dbReference>
<dbReference type="Pfam" id="PF05199">
    <property type="entry name" value="GMC_oxred_C"/>
    <property type="match status" value="1"/>
</dbReference>
<dbReference type="Pfam" id="PF00732">
    <property type="entry name" value="GMC_oxred_N"/>
    <property type="match status" value="1"/>
</dbReference>
<dbReference type="PIRSF" id="PIRSF000137">
    <property type="entry name" value="Alcohol_oxidase"/>
    <property type="match status" value="1"/>
</dbReference>
<dbReference type="SUPFAM" id="SSF54373">
    <property type="entry name" value="FAD-linked reductases, C-terminal domain"/>
    <property type="match status" value="1"/>
</dbReference>
<dbReference type="SUPFAM" id="SSF51905">
    <property type="entry name" value="FAD/NAD(P)-binding domain"/>
    <property type="match status" value="1"/>
</dbReference>
<dbReference type="PROSITE" id="PS00623">
    <property type="entry name" value="GMC_OXRED_1"/>
    <property type="match status" value="1"/>
</dbReference>
<dbReference type="PROSITE" id="PS00624">
    <property type="entry name" value="GMC_OXRED_2"/>
    <property type="match status" value="1"/>
</dbReference>
<feature type="chain" id="PRO_0000258930" description="Oxygen-dependent choline dehydrogenase">
    <location>
        <begin position="1"/>
        <end position="568"/>
    </location>
</feature>
<feature type="active site" description="Proton acceptor" evidence="1">
    <location>
        <position position="477"/>
    </location>
</feature>
<feature type="binding site" evidence="1">
    <location>
        <begin position="8"/>
        <end position="37"/>
    </location>
    <ligand>
        <name>FAD</name>
        <dbReference type="ChEBI" id="CHEBI:57692"/>
    </ligand>
</feature>
<organism>
    <name type="scientific">Pseudomonas savastanoi pv. phaseolicola (strain 1448A / Race 6)</name>
    <name type="common">Pseudomonas syringae pv. phaseolicola (strain 1448A / Race 6)</name>
    <dbReference type="NCBI Taxonomy" id="264730"/>
    <lineage>
        <taxon>Bacteria</taxon>
        <taxon>Pseudomonadati</taxon>
        <taxon>Pseudomonadota</taxon>
        <taxon>Gammaproteobacteria</taxon>
        <taxon>Pseudomonadales</taxon>
        <taxon>Pseudomonadaceae</taxon>
        <taxon>Pseudomonas</taxon>
    </lineage>
</organism>
<name>BETA_PSE14</name>
<evidence type="ECO:0000255" key="1">
    <source>
        <dbReference type="HAMAP-Rule" id="MF_00750"/>
    </source>
</evidence>
<sequence>MTTQSEYDYIIIGAGSAGNTLAARLTEDAGVTVLLLEAGGPDYRLDFRTQMPAALAFPLQGRRYNWAYETEPEPHMNNRRMECGRGKGLGGSSLINGMCYIRGNAMDYDGWAKEPGLEDWSYLDCLPYFRKAETRDIGPNDYHGGEGPVSVTKPKAGNNPLFHAMVEAGVQAGFPRTDDLNGYQQEGFGPMDRTVTPNGRRASTARGYLDEAKKRSTLTIVTHALTDRILFEGKRAVGVAYLVGDSDTRIQARARKEVLLCGGAIASPQILQRSGVGPAEVLNKLDIPVVHDLPGVGQNLQDHLEMYLQYACTQPVSLYPSLKWWNQPAIGAKWMFLGTGIGASNQFEAGGFIRSSEAFEWPNIQYHFLPVAINYNGTKGVQEHGFQAHVGSMRSPSRGRVQVKSKDPREYPSILFNYMSSEQDWQEFRDGIRLTREIMQQPALDPYRGREISPGIDVQSDEALDQFVREHAETAYHPSCSCKMGTDEMAVVDGQGRVHGLQSLRVVDASIMPIITTGNLNAPTIMIAEKIADKIRGRQPLPRSTADYFVAGDKPARGKPLREISHQA</sequence>